<proteinExistence type="inferred from homology"/>
<comment type="function">
    <text evidence="1">Specifically methylates the cytosine at position 1407 (m5C1407) of 16S rRNA.</text>
</comment>
<comment type="catalytic activity">
    <reaction evidence="1">
        <text>cytidine(1407) in 16S rRNA + S-adenosyl-L-methionine = 5-methylcytidine(1407) in 16S rRNA + S-adenosyl-L-homocysteine + H(+)</text>
        <dbReference type="Rhea" id="RHEA:42756"/>
        <dbReference type="Rhea" id="RHEA-COMP:10223"/>
        <dbReference type="Rhea" id="RHEA-COMP:10224"/>
        <dbReference type="ChEBI" id="CHEBI:15378"/>
        <dbReference type="ChEBI" id="CHEBI:57856"/>
        <dbReference type="ChEBI" id="CHEBI:59789"/>
        <dbReference type="ChEBI" id="CHEBI:74483"/>
        <dbReference type="ChEBI" id="CHEBI:82748"/>
        <dbReference type="EC" id="2.1.1.178"/>
    </reaction>
</comment>
<comment type="subcellular location">
    <subcellularLocation>
        <location evidence="1">Cytoplasm</location>
    </subcellularLocation>
</comment>
<comment type="similarity">
    <text evidence="1">Belongs to the class I-like SAM-binding methyltransferase superfamily. RsmB/NOP family.</text>
</comment>
<accession>B5FE06</accession>
<reference key="1">
    <citation type="submission" date="2008-08" db="EMBL/GenBank/DDBJ databases">
        <title>Complete sequence of Vibrio fischeri strain MJ11.</title>
        <authorList>
            <person name="Mandel M.J."/>
            <person name="Stabb E.V."/>
            <person name="Ruby E.G."/>
            <person name="Ferriera S."/>
            <person name="Johnson J."/>
            <person name="Kravitz S."/>
            <person name="Beeson K."/>
            <person name="Sutton G."/>
            <person name="Rogers Y.-H."/>
            <person name="Friedman R."/>
            <person name="Frazier M."/>
            <person name="Venter J.C."/>
        </authorList>
    </citation>
    <scope>NUCLEOTIDE SEQUENCE [LARGE SCALE GENOMIC DNA]</scope>
    <source>
        <strain>MJ11</strain>
    </source>
</reference>
<sequence>MHDNIFLPDAFLAQVQETMPSHLSMDEFIAACKRPLRRSIRVNTLKNSVEEFKQRAAEKQWDLEPVPWCDTGFWITRPESDTVKLGSTAEHMAGLFYIQEASSMMPVTALLKDNDDIEMALDMASAPGSKTTQLAAGMKNQGALVANEFSSSRVKVLCSNIQRCGVSNVALTHFDGRVFGGWLPETFDSILLDAPCSGEGTIRKDPDAMHNWSPESVIEIGDTQRDLIESAFHALKPGGVMVYSTCTLNHEENQNICHHLVEQFGDAVTFKPLGDLFENAEKALTKEGFLHIYPQIFDSEGFFVAKIRKNSSTTPPEVKKRLGKFPFAPASNKEAQAIEAELKSTLQLAIPEDNEFWIRDKEVWAFPKRMKPLIGEMRYHRIGFKLAETHKKGYRWQHEAIMALATADNPTCAELTTEQAREWYMGRDVRPDFSGKGETIVTYKGAVIGLGKWVGNRIKNGLPRELVRDGNLF</sequence>
<gene>
    <name evidence="1" type="primary">rsmF</name>
    <name type="ordered locus">VFMJ11_1352</name>
</gene>
<organism>
    <name type="scientific">Aliivibrio fischeri (strain MJ11)</name>
    <name type="common">Vibrio fischeri</name>
    <dbReference type="NCBI Taxonomy" id="388396"/>
    <lineage>
        <taxon>Bacteria</taxon>
        <taxon>Pseudomonadati</taxon>
        <taxon>Pseudomonadota</taxon>
        <taxon>Gammaproteobacteria</taxon>
        <taxon>Vibrionales</taxon>
        <taxon>Vibrionaceae</taxon>
        <taxon>Aliivibrio</taxon>
    </lineage>
</organism>
<evidence type="ECO:0000255" key="1">
    <source>
        <dbReference type="HAMAP-Rule" id="MF_01579"/>
    </source>
</evidence>
<dbReference type="EC" id="2.1.1.178" evidence="1"/>
<dbReference type="EMBL" id="CP001139">
    <property type="protein sequence ID" value="ACH67189.1"/>
    <property type="molecule type" value="Genomic_DNA"/>
</dbReference>
<dbReference type="RefSeq" id="WP_012534258.1">
    <property type="nucleotide sequence ID" value="NC_011184.1"/>
</dbReference>
<dbReference type="SMR" id="B5FE06"/>
<dbReference type="KEGG" id="vfm:VFMJ11_1352"/>
<dbReference type="HOGENOM" id="CLU_005316_6_2_6"/>
<dbReference type="Proteomes" id="UP000001857">
    <property type="component" value="Chromosome I"/>
</dbReference>
<dbReference type="GO" id="GO:0005737">
    <property type="term" value="C:cytoplasm"/>
    <property type="evidence" value="ECO:0007669"/>
    <property type="project" value="UniProtKB-SubCell"/>
</dbReference>
<dbReference type="GO" id="GO:0003723">
    <property type="term" value="F:RNA binding"/>
    <property type="evidence" value="ECO:0007669"/>
    <property type="project" value="UniProtKB-KW"/>
</dbReference>
<dbReference type="GO" id="GO:0009383">
    <property type="term" value="F:rRNA (cytosine-C5-)-methyltransferase activity"/>
    <property type="evidence" value="ECO:0007669"/>
    <property type="project" value="TreeGrafter"/>
</dbReference>
<dbReference type="GO" id="GO:0070475">
    <property type="term" value="P:rRNA base methylation"/>
    <property type="evidence" value="ECO:0007669"/>
    <property type="project" value="TreeGrafter"/>
</dbReference>
<dbReference type="CDD" id="cd02440">
    <property type="entry name" value="AdoMet_MTases"/>
    <property type="match status" value="1"/>
</dbReference>
<dbReference type="Gene3D" id="3.10.450.720">
    <property type="match status" value="1"/>
</dbReference>
<dbReference type="Gene3D" id="3.40.50.150">
    <property type="entry name" value="Vaccinia Virus protein VP39"/>
    <property type="match status" value="1"/>
</dbReference>
<dbReference type="HAMAP" id="MF_01579">
    <property type="entry name" value="16SrRNA_methyltr_F"/>
    <property type="match status" value="1"/>
</dbReference>
<dbReference type="InterPro" id="IPR031341">
    <property type="entry name" value="Methyltr_RsmF_N"/>
</dbReference>
<dbReference type="InterPro" id="IPR049560">
    <property type="entry name" value="MeTrfase_RsmB-F_NOP2_cat"/>
</dbReference>
<dbReference type="InterPro" id="IPR001678">
    <property type="entry name" value="MeTrfase_RsmB-F_NOP2_dom"/>
</dbReference>
<dbReference type="InterPro" id="IPR027391">
    <property type="entry name" value="Nol1_Nop2_Fmu_2"/>
</dbReference>
<dbReference type="InterPro" id="IPR011023">
    <property type="entry name" value="Nop2p"/>
</dbReference>
<dbReference type="InterPro" id="IPR023267">
    <property type="entry name" value="RCMT"/>
</dbReference>
<dbReference type="InterPro" id="IPR023545">
    <property type="entry name" value="rRNA_ssu_MeTfrase_F"/>
</dbReference>
<dbReference type="InterPro" id="IPR029063">
    <property type="entry name" value="SAM-dependent_MTases_sf"/>
</dbReference>
<dbReference type="InterPro" id="IPR048457">
    <property type="entry name" value="YebU_pre-PUA_dom"/>
</dbReference>
<dbReference type="NCBIfam" id="TIGR00446">
    <property type="entry name" value="nop2p"/>
    <property type="match status" value="1"/>
</dbReference>
<dbReference type="NCBIfam" id="NF008898">
    <property type="entry name" value="PRK11933.1"/>
    <property type="match status" value="1"/>
</dbReference>
<dbReference type="PANTHER" id="PTHR22807:SF30">
    <property type="entry name" value="28S RRNA (CYTOSINE(4447)-C(5))-METHYLTRANSFERASE-RELATED"/>
    <property type="match status" value="1"/>
</dbReference>
<dbReference type="PANTHER" id="PTHR22807">
    <property type="entry name" value="NOP2 YEAST -RELATED NOL1/NOP2/FMU SUN DOMAIN-CONTAINING"/>
    <property type="match status" value="1"/>
</dbReference>
<dbReference type="Pfam" id="PF01189">
    <property type="entry name" value="Methyltr_RsmB-F"/>
    <property type="match status" value="1"/>
</dbReference>
<dbReference type="Pfam" id="PF17125">
    <property type="entry name" value="Methyltr_RsmF_N"/>
    <property type="match status" value="1"/>
</dbReference>
<dbReference type="Pfam" id="PF13636">
    <property type="entry name" value="Methyltranf_PUA"/>
    <property type="match status" value="1"/>
</dbReference>
<dbReference type="Pfam" id="PF21150">
    <property type="entry name" value="YebU_pre-PUA_dom"/>
    <property type="match status" value="1"/>
</dbReference>
<dbReference type="PRINTS" id="PR02008">
    <property type="entry name" value="RCMTFAMILY"/>
</dbReference>
<dbReference type="SUPFAM" id="SSF53335">
    <property type="entry name" value="S-adenosyl-L-methionine-dependent methyltransferases"/>
    <property type="match status" value="1"/>
</dbReference>
<dbReference type="PROSITE" id="PS51686">
    <property type="entry name" value="SAM_MT_RSMB_NOP"/>
    <property type="match status" value="1"/>
</dbReference>
<keyword id="KW-0963">Cytoplasm</keyword>
<keyword id="KW-0489">Methyltransferase</keyword>
<keyword id="KW-0694">RNA-binding</keyword>
<keyword id="KW-0698">rRNA processing</keyword>
<keyword id="KW-0949">S-adenosyl-L-methionine</keyword>
<keyword id="KW-0808">Transferase</keyword>
<name>RSMF_ALIFM</name>
<feature type="chain" id="PRO_1000195094" description="Ribosomal RNA small subunit methyltransferase F">
    <location>
        <begin position="1"/>
        <end position="473"/>
    </location>
</feature>
<feature type="active site" description="Nucleophile" evidence="1">
    <location>
        <position position="246"/>
    </location>
</feature>
<feature type="binding site" evidence="1">
    <location>
        <begin position="124"/>
        <end position="130"/>
    </location>
    <ligand>
        <name>S-adenosyl-L-methionine</name>
        <dbReference type="ChEBI" id="CHEBI:59789"/>
    </ligand>
</feature>
<feature type="binding site" evidence="1">
    <location>
        <position position="148"/>
    </location>
    <ligand>
        <name>S-adenosyl-L-methionine</name>
        <dbReference type="ChEBI" id="CHEBI:59789"/>
    </ligand>
</feature>
<feature type="binding site" evidence="1">
    <location>
        <position position="175"/>
    </location>
    <ligand>
        <name>S-adenosyl-L-methionine</name>
        <dbReference type="ChEBI" id="CHEBI:59789"/>
    </ligand>
</feature>
<feature type="binding site" evidence="1">
    <location>
        <position position="193"/>
    </location>
    <ligand>
        <name>S-adenosyl-L-methionine</name>
        <dbReference type="ChEBI" id="CHEBI:59789"/>
    </ligand>
</feature>
<protein>
    <recommendedName>
        <fullName evidence="1">Ribosomal RNA small subunit methyltransferase F</fullName>
        <ecNumber evidence="1">2.1.1.178</ecNumber>
    </recommendedName>
    <alternativeName>
        <fullName evidence="1">16S rRNA m5C1407 methyltransferase</fullName>
    </alternativeName>
    <alternativeName>
        <fullName evidence="1">rRNA (cytosine-C(5)-)-methyltransferase RsmF</fullName>
    </alternativeName>
</protein>